<keyword id="KW-0479">Metal-binding</keyword>
<keyword id="KW-0560">Oxidoreductase</keyword>
<keyword id="KW-1185">Reference proteome</keyword>
<keyword id="KW-0862">Zinc</keyword>
<protein>
    <recommendedName>
        <fullName evidence="1">Peptide methionine sulfoxide reductase MsrB</fullName>
        <ecNumber evidence="1">1.8.4.12</ecNumber>
    </recommendedName>
    <alternativeName>
        <fullName evidence="1">Peptide-methionine (R)-S-oxide reductase</fullName>
    </alternativeName>
</protein>
<feature type="chain" id="PRO_0000140259" description="Peptide methionine sulfoxide reductase MsrB">
    <location>
        <begin position="1"/>
        <end position="135"/>
    </location>
</feature>
<feature type="domain" description="MsrB" evidence="2">
    <location>
        <begin position="13"/>
        <end position="135"/>
    </location>
</feature>
<feature type="active site" description="Nucleophile" evidence="2">
    <location>
        <position position="124"/>
    </location>
</feature>
<feature type="binding site" evidence="2">
    <location>
        <position position="52"/>
    </location>
    <ligand>
        <name>Zn(2+)</name>
        <dbReference type="ChEBI" id="CHEBI:29105"/>
    </ligand>
</feature>
<feature type="binding site" evidence="2">
    <location>
        <position position="55"/>
    </location>
    <ligand>
        <name>Zn(2+)</name>
        <dbReference type="ChEBI" id="CHEBI:29105"/>
    </ligand>
</feature>
<feature type="binding site" evidence="2">
    <location>
        <position position="101"/>
    </location>
    <ligand>
        <name>Zn(2+)</name>
        <dbReference type="ChEBI" id="CHEBI:29105"/>
    </ligand>
</feature>
<feature type="binding site" evidence="2">
    <location>
        <position position="104"/>
    </location>
    <ligand>
        <name>Zn(2+)</name>
        <dbReference type="ChEBI" id="CHEBI:29105"/>
    </ligand>
</feature>
<accession>Q8UGX7</accession>
<comment type="catalytic activity">
    <reaction evidence="1">
        <text>L-methionyl-[protein] + [thioredoxin]-disulfide + H2O = L-methionyl-(R)-S-oxide-[protein] + [thioredoxin]-dithiol</text>
        <dbReference type="Rhea" id="RHEA:24164"/>
        <dbReference type="Rhea" id="RHEA-COMP:10698"/>
        <dbReference type="Rhea" id="RHEA-COMP:10700"/>
        <dbReference type="Rhea" id="RHEA-COMP:12313"/>
        <dbReference type="Rhea" id="RHEA-COMP:12314"/>
        <dbReference type="ChEBI" id="CHEBI:15377"/>
        <dbReference type="ChEBI" id="CHEBI:16044"/>
        <dbReference type="ChEBI" id="CHEBI:29950"/>
        <dbReference type="ChEBI" id="CHEBI:45764"/>
        <dbReference type="ChEBI" id="CHEBI:50058"/>
        <dbReference type="EC" id="1.8.4.12"/>
    </reaction>
</comment>
<comment type="cofactor">
    <cofactor evidence="1">
        <name>Zn(2+)</name>
        <dbReference type="ChEBI" id="CHEBI:29105"/>
    </cofactor>
    <text evidence="1">Binds 1 zinc ion per subunit. The zinc ion is important for the structural integrity of the protein.</text>
</comment>
<comment type="similarity">
    <text evidence="1">Belongs to the MsrB Met sulfoxide reductase family.</text>
</comment>
<organism>
    <name type="scientific">Agrobacterium fabrum (strain C58 / ATCC 33970)</name>
    <name type="common">Agrobacterium tumefaciens (strain C58)</name>
    <dbReference type="NCBI Taxonomy" id="176299"/>
    <lineage>
        <taxon>Bacteria</taxon>
        <taxon>Pseudomonadati</taxon>
        <taxon>Pseudomonadota</taxon>
        <taxon>Alphaproteobacteria</taxon>
        <taxon>Hyphomicrobiales</taxon>
        <taxon>Rhizobiaceae</taxon>
        <taxon>Rhizobium/Agrobacterium group</taxon>
        <taxon>Agrobacterium</taxon>
        <taxon>Agrobacterium tumefaciens complex</taxon>
    </lineage>
</organism>
<gene>
    <name evidence="1" type="primary">msrB</name>
    <name type="ordered locus">Atu0908</name>
    <name type="ORF">AGR_C_1655</name>
</gene>
<reference key="1">
    <citation type="journal article" date="2001" name="Science">
        <title>The genome of the natural genetic engineer Agrobacterium tumefaciens C58.</title>
        <authorList>
            <person name="Wood D.W."/>
            <person name="Setubal J.C."/>
            <person name="Kaul R."/>
            <person name="Monks D.E."/>
            <person name="Kitajima J.P."/>
            <person name="Okura V.K."/>
            <person name="Zhou Y."/>
            <person name="Chen L."/>
            <person name="Wood G.E."/>
            <person name="Almeida N.F. Jr."/>
            <person name="Woo L."/>
            <person name="Chen Y."/>
            <person name="Paulsen I.T."/>
            <person name="Eisen J.A."/>
            <person name="Karp P.D."/>
            <person name="Bovee D. Sr."/>
            <person name="Chapman P."/>
            <person name="Clendenning J."/>
            <person name="Deatherage G."/>
            <person name="Gillet W."/>
            <person name="Grant C."/>
            <person name="Kutyavin T."/>
            <person name="Levy R."/>
            <person name="Li M.-J."/>
            <person name="McClelland E."/>
            <person name="Palmieri A."/>
            <person name="Raymond C."/>
            <person name="Rouse G."/>
            <person name="Saenphimmachak C."/>
            <person name="Wu Z."/>
            <person name="Romero P."/>
            <person name="Gordon D."/>
            <person name="Zhang S."/>
            <person name="Yoo H."/>
            <person name="Tao Y."/>
            <person name="Biddle P."/>
            <person name="Jung M."/>
            <person name="Krespan W."/>
            <person name="Perry M."/>
            <person name="Gordon-Kamm B."/>
            <person name="Liao L."/>
            <person name="Kim S."/>
            <person name="Hendrick C."/>
            <person name="Zhao Z.-Y."/>
            <person name="Dolan M."/>
            <person name="Chumley F."/>
            <person name="Tingey S.V."/>
            <person name="Tomb J.-F."/>
            <person name="Gordon M.P."/>
            <person name="Olson M.V."/>
            <person name="Nester E.W."/>
        </authorList>
    </citation>
    <scope>NUCLEOTIDE SEQUENCE [LARGE SCALE GENOMIC DNA]</scope>
    <source>
        <strain>C58 / ATCC 33970</strain>
    </source>
</reference>
<reference key="2">
    <citation type="journal article" date="2001" name="Science">
        <title>Genome sequence of the plant pathogen and biotechnology agent Agrobacterium tumefaciens C58.</title>
        <authorList>
            <person name="Goodner B."/>
            <person name="Hinkle G."/>
            <person name="Gattung S."/>
            <person name="Miller N."/>
            <person name="Blanchard M."/>
            <person name="Qurollo B."/>
            <person name="Goldman B.S."/>
            <person name="Cao Y."/>
            <person name="Askenazi M."/>
            <person name="Halling C."/>
            <person name="Mullin L."/>
            <person name="Houmiel K."/>
            <person name="Gordon J."/>
            <person name="Vaudin M."/>
            <person name="Iartchouk O."/>
            <person name="Epp A."/>
            <person name="Liu F."/>
            <person name="Wollam C."/>
            <person name="Allinger M."/>
            <person name="Doughty D."/>
            <person name="Scott C."/>
            <person name="Lappas C."/>
            <person name="Markelz B."/>
            <person name="Flanagan C."/>
            <person name="Crowell C."/>
            <person name="Gurson J."/>
            <person name="Lomo C."/>
            <person name="Sear C."/>
            <person name="Strub G."/>
            <person name="Cielo C."/>
            <person name="Slater S."/>
        </authorList>
    </citation>
    <scope>NUCLEOTIDE SEQUENCE [LARGE SCALE GENOMIC DNA]</scope>
    <source>
        <strain>C58 / ATCC 33970</strain>
    </source>
</reference>
<evidence type="ECO:0000255" key="1">
    <source>
        <dbReference type="HAMAP-Rule" id="MF_01400"/>
    </source>
</evidence>
<evidence type="ECO:0000255" key="2">
    <source>
        <dbReference type="PROSITE-ProRule" id="PRU01126"/>
    </source>
</evidence>
<name>MSRB_AGRFC</name>
<sequence>MSDLTSPKVNKSDADWREQLTPEQYHILREHGTERPFTGPYWNSTEKGLYRCAACDEPLFLSDTKFDAGCGWPSYFEPVKPGAVTEHRDSTHGMVRTEIRCANCGGHLGHVFPDGPPPTGLRYCINGHSMVFEPV</sequence>
<dbReference type="EC" id="1.8.4.12" evidence="1"/>
<dbReference type="EMBL" id="AE007869">
    <property type="protein sequence ID" value="AAK86712.1"/>
    <property type="molecule type" value="Genomic_DNA"/>
</dbReference>
<dbReference type="PIR" id="AD2688">
    <property type="entry name" value="AD2688"/>
</dbReference>
<dbReference type="PIR" id="G97469">
    <property type="entry name" value="G97469"/>
</dbReference>
<dbReference type="RefSeq" id="NP_353927.1">
    <property type="nucleotide sequence ID" value="NC_003062.2"/>
</dbReference>
<dbReference type="RefSeq" id="WP_010971244.1">
    <property type="nucleotide sequence ID" value="NC_003062.2"/>
</dbReference>
<dbReference type="SMR" id="Q8UGX7"/>
<dbReference type="STRING" id="176299.Atu0908"/>
<dbReference type="EnsemblBacteria" id="AAK86712">
    <property type="protein sequence ID" value="AAK86712"/>
    <property type="gene ID" value="Atu0908"/>
</dbReference>
<dbReference type="GeneID" id="1132946"/>
<dbReference type="KEGG" id="atu:Atu0908"/>
<dbReference type="PATRIC" id="fig|176299.10.peg.908"/>
<dbReference type="eggNOG" id="COG0229">
    <property type="taxonomic scope" value="Bacteria"/>
</dbReference>
<dbReference type="HOGENOM" id="CLU_031040_8_5_5"/>
<dbReference type="OrthoDB" id="9785497at2"/>
<dbReference type="PhylomeDB" id="Q8UGX7"/>
<dbReference type="BioCyc" id="AGRO:ATU0908-MONOMER"/>
<dbReference type="Proteomes" id="UP000000813">
    <property type="component" value="Chromosome circular"/>
</dbReference>
<dbReference type="GO" id="GO:0005737">
    <property type="term" value="C:cytoplasm"/>
    <property type="evidence" value="ECO:0007669"/>
    <property type="project" value="TreeGrafter"/>
</dbReference>
<dbReference type="GO" id="GO:0033743">
    <property type="term" value="F:peptide-methionine (R)-S-oxide reductase activity"/>
    <property type="evidence" value="ECO:0007669"/>
    <property type="project" value="UniProtKB-UniRule"/>
</dbReference>
<dbReference type="GO" id="GO:0008270">
    <property type="term" value="F:zinc ion binding"/>
    <property type="evidence" value="ECO:0007669"/>
    <property type="project" value="UniProtKB-UniRule"/>
</dbReference>
<dbReference type="GO" id="GO:0030091">
    <property type="term" value="P:protein repair"/>
    <property type="evidence" value="ECO:0007669"/>
    <property type="project" value="InterPro"/>
</dbReference>
<dbReference type="GO" id="GO:0006979">
    <property type="term" value="P:response to oxidative stress"/>
    <property type="evidence" value="ECO:0007669"/>
    <property type="project" value="InterPro"/>
</dbReference>
<dbReference type="FunFam" id="2.170.150.20:FF:000001">
    <property type="entry name" value="Peptide methionine sulfoxide reductase MsrB"/>
    <property type="match status" value="1"/>
</dbReference>
<dbReference type="Gene3D" id="2.170.150.20">
    <property type="entry name" value="Peptide methionine sulfoxide reductase"/>
    <property type="match status" value="1"/>
</dbReference>
<dbReference type="HAMAP" id="MF_01400">
    <property type="entry name" value="MsrB"/>
    <property type="match status" value="1"/>
</dbReference>
<dbReference type="InterPro" id="IPR028427">
    <property type="entry name" value="Met_Sox_Rdtase_MsrB"/>
</dbReference>
<dbReference type="InterPro" id="IPR002579">
    <property type="entry name" value="Met_Sox_Rdtase_MsrB_dom"/>
</dbReference>
<dbReference type="InterPro" id="IPR011057">
    <property type="entry name" value="Mss4-like_sf"/>
</dbReference>
<dbReference type="NCBIfam" id="TIGR00357">
    <property type="entry name" value="peptide-methionine (R)-S-oxide reductase MsrB"/>
    <property type="match status" value="1"/>
</dbReference>
<dbReference type="PANTHER" id="PTHR10173">
    <property type="entry name" value="METHIONINE SULFOXIDE REDUCTASE"/>
    <property type="match status" value="1"/>
</dbReference>
<dbReference type="PANTHER" id="PTHR10173:SF57">
    <property type="entry name" value="PEPTIDE-METHIONINE (R)-S-OXIDE REDUCTASE"/>
    <property type="match status" value="1"/>
</dbReference>
<dbReference type="Pfam" id="PF01641">
    <property type="entry name" value="SelR"/>
    <property type="match status" value="1"/>
</dbReference>
<dbReference type="SUPFAM" id="SSF51316">
    <property type="entry name" value="Mss4-like"/>
    <property type="match status" value="1"/>
</dbReference>
<dbReference type="PROSITE" id="PS51790">
    <property type="entry name" value="MSRB"/>
    <property type="match status" value="1"/>
</dbReference>
<proteinExistence type="inferred from homology"/>